<evidence type="ECO:0000255" key="1">
    <source>
        <dbReference type="HAMAP-Rule" id="MF_00184"/>
    </source>
</evidence>
<evidence type="ECO:0000255" key="2">
    <source>
        <dbReference type="PROSITE-ProRule" id="PRU01228"/>
    </source>
</evidence>
<organism>
    <name type="scientific">Streptococcus gordonii (strain Challis / ATCC 35105 / BCRC 15272 / CH1 / DL1 / V288)</name>
    <dbReference type="NCBI Taxonomy" id="467705"/>
    <lineage>
        <taxon>Bacteria</taxon>
        <taxon>Bacillati</taxon>
        <taxon>Bacillota</taxon>
        <taxon>Bacilli</taxon>
        <taxon>Lactobacillales</taxon>
        <taxon>Streptococcaceae</taxon>
        <taxon>Streptococcus</taxon>
    </lineage>
</organism>
<name>SYT_STRGC</name>
<reference key="1">
    <citation type="journal article" date="2007" name="J. Bacteriol.">
        <title>Genome-wide transcriptional changes in Streptococcus gordonii in response to competence signaling peptide.</title>
        <authorList>
            <person name="Vickerman M.M."/>
            <person name="Iobst S."/>
            <person name="Jesionowski A.M."/>
            <person name="Gill S.R."/>
        </authorList>
    </citation>
    <scope>NUCLEOTIDE SEQUENCE [LARGE SCALE GENOMIC DNA]</scope>
    <source>
        <strain>Challis / ATCC 35105 / BCRC 15272 / CH1 / DL1 / V288</strain>
    </source>
</reference>
<protein>
    <recommendedName>
        <fullName evidence="1">Threonine--tRNA ligase</fullName>
        <ecNumber evidence="1">6.1.1.3</ecNumber>
    </recommendedName>
    <alternativeName>
        <fullName evidence="1">Threonyl-tRNA synthetase</fullName>
        <shortName evidence="1">ThrRS</shortName>
    </alternativeName>
</protein>
<proteinExistence type="inferred from homology"/>
<dbReference type="EC" id="6.1.1.3" evidence="1"/>
<dbReference type="EMBL" id="CP000725">
    <property type="protein sequence ID" value="ABV10358.1"/>
    <property type="molecule type" value="Genomic_DNA"/>
</dbReference>
<dbReference type="RefSeq" id="WP_012000240.1">
    <property type="nucleotide sequence ID" value="NC_009785.1"/>
</dbReference>
<dbReference type="SMR" id="A8AWB7"/>
<dbReference type="STRING" id="467705.SGO_0778"/>
<dbReference type="KEGG" id="sgo:SGO_0778"/>
<dbReference type="eggNOG" id="COG0441">
    <property type="taxonomic scope" value="Bacteria"/>
</dbReference>
<dbReference type="HOGENOM" id="CLU_008554_3_2_9"/>
<dbReference type="Proteomes" id="UP000001131">
    <property type="component" value="Chromosome"/>
</dbReference>
<dbReference type="GO" id="GO:0005737">
    <property type="term" value="C:cytoplasm"/>
    <property type="evidence" value="ECO:0007669"/>
    <property type="project" value="UniProtKB-SubCell"/>
</dbReference>
<dbReference type="GO" id="GO:0005524">
    <property type="term" value="F:ATP binding"/>
    <property type="evidence" value="ECO:0007669"/>
    <property type="project" value="UniProtKB-UniRule"/>
</dbReference>
<dbReference type="GO" id="GO:0140096">
    <property type="term" value="F:catalytic activity, acting on a protein"/>
    <property type="evidence" value="ECO:0007669"/>
    <property type="project" value="UniProtKB-ARBA"/>
</dbReference>
<dbReference type="GO" id="GO:0046872">
    <property type="term" value="F:metal ion binding"/>
    <property type="evidence" value="ECO:0007669"/>
    <property type="project" value="UniProtKB-KW"/>
</dbReference>
<dbReference type="GO" id="GO:0004829">
    <property type="term" value="F:threonine-tRNA ligase activity"/>
    <property type="evidence" value="ECO:0007669"/>
    <property type="project" value="UniProtKB-UniRule"/>
</dbReference>
<dbReference type="GO" id="GO:0016740">
    <property type="term" value="F:transferase activity"/>
    <property type="evidence" value="ECO:0007669"/>
    <property type="project" value="UniProtKB-ARBA"/>
</dbReference>
<dbReference type="GO" id="GO:0000049">
    <property type="term" value="F:tRNA binding"/>
    <property type="evidence" value="ECO:0007669"/>
    <property type="project" value="UniProtKB-KW"/>
</dbReference>
<dbReference type="GO" id="GO:0006435">
    <property type="term" value="P:threonyl-tRNA aminoacylation"/>
    <property type="evidence" value="ECO:0007669"/>
    <property type="project" value="UniProtKB-UniRule"/>
</dbReference>
<dbReference type="CDD" id="cd01667">
    <property type="entry name" value="TGS_ThrRS"/>
    <property type="match status" value="1"/>
</dbReference>
<dbReference type="CDD" id="cd00860">
    <property type="entry name" value="ThrRS_anticodon"/>
    <property type="match status" value="1"/>
</dbReference>
<dbReference type="CDD" id="cd00771">
    <property type="entry name" value="ThrRS_core"/>
    <property type="match status" value="1"/>
</dbReference>
<dbReference type="FunFam" id="3.10.20.30:FF:000005">
    <property type="entry name" value="Threonine--tRNA ligase"/>
    <property type="match status" value="1"/>
</dbReference>
<dbReference type="FunFam" id="3.30.54.20:FF:000002">
    <property type="entry name" value="Threonine--tRNA ligase"/>
    <property type="match status" value="1"/>
</dbReference>
<dbReference type="FunFam" id="3.30.930.10:FF:000002">
    <property type="entry name" value="Threonine--tRNA ligase"/>
    <property type="match status" value="1"/>
</dbReference>
<dbReference type="FunFam" id="3.40.50.800:FF:000001">
    <property type="entry name" value="Threonine--tRNA ligase"/>
    <property type="match status" value="1"/>
</dbReference>
<dbReference type="FunFam" id="3.30.980.10:FF:000005">
    <property type="entry name" value="Threonyl-tRNA synthetase, mitochondrial"/>
    <property type="match status" value="1"/>
</dbReference>
<dbReference type="Gene3D" id="3.10.20.30">
    <property type="match status" value="1"/>
</dbReference>
<dbReference type="Gene3D" id="3.30.54.20">
    <property type="match status" value="1"/>
</dbReference>
<dbReference type="Gene3D" id="3.40.50.800">
    <property type="entry name" value="Anticodon-binding domain"/>
    <property type="match status" value="1"/>
</dbReference>
<dbReference type="Gene3D" id="3.30.930.10">
    <property type="entry name" value="Bira Bifunctional Protein, Domain 2"/>
    <property type="match status" value="1"/>
</dbReference>
<dbReference type="Gene3D" id="3.30.980.10">
    <property type="entry name" value="Threonyl-trna Synthetase, Chain A, domain 2"/>
    <property type="match status" value="1"/>
</dbReference>
<dbReference type="HAMAP" id="MF_00184">
    <property type="entry name" value="Thr_tRNA_synth"/>
    <property type="match status" value="1"/>
</dbReference>
<dbReference type="InterPro" id="IPR002314">
    <property type="entry name" value="aa-tRNA-synt_IIb"/>
</dbReference>
<dbReference type="InterPro" id="IPR006195">
    <property type="entry name" value="aa-tRNA-synth_II"/>
</dbReference>
<dbReference type="InterPro" id="IPR045864">
    <property type="entry name" value="aa-tRNA-synth_II/BPL/LPL"/>
</dbReference>
<dbReference type="InterPro" id="IPR004154">
    <property type="entry name" value="Anticodon-bd"/>
</dbReference>
<dbReference type="InterPro" id="IPR036621">
    <property type="entry name" value="Anticodon-bd_dom_sf"/>
</dbReference>
<dbReference type="InterPro" id="IPR012675">
    <property type="entry name" value="Beta-grasp_dom_sf"/>
</dbReference>
<dbReference type="InterPro" id="IPR004095">
    <property type="entry name" value="TGS"/>
</dbReference>
<dbReference type="InterPro" id="IPR012676">
    <property type="entry name" value="TGS-like"/>
</dbReference>
<dbReference type="InterPro" id="IPR002320">
    <property type="entry name" value="Thr-tRNA-ligase_IIa"/>
</dbReference>
<dbReference type="InterPro" id="IPR018163">
    <property type="entry name" value="Thr/Ala-tRNA-synth_IIc_edit"/>
</dbReference>
<dbReference type="InterPro" id="IPR047246">
    <property type="entry name" value="ThrRS_anticodon"/>
</dbReference>
<dbReference type="InterPro" id="IPR033728">
    <property type="entry name" value="ThrRS_core"/>
</dbReference>
<dbReference type="InterPro" id="IPR012947">
    <property type="entry name" value="tRNA_SAD"/>
</dbReference>
<dbReference type="NCBIfam" id="TIGR00418">
    <property type="entry name" value="thrS"/>
    <property type="match status" value="1"/>
</dbReference>
<dbReference type="PANTHER" id="PTHR11451:SF56">
    <property type="entry name" value="THREONINE--TRNA LIGASE 1"/>
    <property type="match status" value="1"/>
</dbReference>
<dbReference type="PANTHER" id="PTHR11451">
    <property type="entry name" value="THREONINE-TRNA LIGASE"/>
    <property type="match status" value="1"/>
</dbReference>
<dbReference type="Pfam" id="PF03129">
    <property type="entry name" value="HGTP_anticodon"/>
    <property type="match status" value="1"/>
</dbReference>
<dbReference type="Pfam" id="PF02824">
    <property type="entry name" value="TGS"/>
    <property type="match status" value="1"/>
</dbReference>
<dbReference type="Pfam" id="PF00587">
    <property type="entry name" value="tRNA-synt_2b"/>
    <property type="match status" value="1"/>
</dbReference>
<dbReference type="Pfam" id="PF07973">
    <property type="entry name" value="tRNA_SAD"/>
    <property type="match status" value="1"/>
</dbReference>
<dbReference type="PRINTS" id="PR01047">
    <property type="entry name" value="TRNASYNTHTHR"/>
</dbReference>
<dbReference type="SMART" id="SM00863">
    <property type="entry name" value="tRNA_SAD"/>
    <property type="match status" value="1"/>
</dbReference>
<dbReference type="SUPFAM" id="SSF52954">
    <property type="entry name" value="Class II aaRS ABD-related"/>
    <property type="match status" value="1"/>
</dbReference>
<dbReference type="SUPFAM" id="SSF55681">
    <property type="entry name" value="Class II aaRS and biotin synthetases"/>
    <property type="match status" value="1"/>
</dbReference>
<dbReference type="SUPFAM" id="SSF81271">
    <property type="entry name" value="TGS-like"/>
    <property type="match status" value="1"/>
</dbReference>
<dbReference type="SUPFAM" id="SSF55186">
    <property type="entry name" value="ThrRS/AlaRS common domain"/>
    <property type="match status" value="1"/>
</dbReference>
<dbReference type="PROSITE" id="PS50862">
    <property type="entry name" value="AA_TRNA_LIGASE_II"/>
    <property type="match status" value="1"/>
</dbReference>
<dbReference type="PROSITE" id="PS51880">
    <property type="entry name" value="TGS"/>
    <property type="match status" value="1"/>
</dbReference>
<comment type="function">
    <text evidence="1">Catalyzes the attachment of threonine to tRNA(Thr) in a two-step reaction: L-threonine is first activated by ATP to form Thr-AMP and then transferred to the acceptor end of tRNA(Thr). Also edits incorrectly charged L-seryl-tRNA(Thr).</text>
</comment>
<comment type="catalytic activity">
    <reaction evidence="1">
        <text>tRNA(Thr) + L-threonine + ATP = L-threonyl-tRNA(Thr) + AMP + diphosphate + H(+)</text>
        <dbReference type="Rhea" id="RHEA:24624"/>
        <dbReference type="Rhea" id="RHEA-COMP:9670"/>
        <dbReference type="Rhea" id="RHEA-COMP:9704"/>
        <dbReference type="ChEBI" id="CHEBI:15378"/>
        <dbReference type="ChEBI" id="CHEBI:30616"/>
        <dbReference type="ChEBI" id="CHEBI:33019"/>
        <dbReference type="ChEBI" id="CHEBI:57926"/>
        <dbReference type="ChEBI" id="CHEBI:78442"/>
        <dbReference type="ChEBI" id="CHEBI:78534"/>
        <dbReference type="ChEBI" id="CHEBI:456215"/>
        <dbReference type="EC" id="6.1.1.3"/>
    </reaction>
</comment>
<comment type="cofactor">
    <cofactor evidence="1">
        <name>Zn(2+)</name>
        <dbReference type="ChEBI" id="CHEBI:29105"/>
    </cofactor>
    <text evidence="1">Binds 1 zinc ion per subunit.</text>
</comment>
<comment type="subunit">
    <text evidence="1">Homodimer.</text>
</comment>
<comment type="subcellular location">
    <subcellularLocation>
        <location evidence="1">Cytoplasm</location>
    </subcellularLocation>
</comment>
<comment type="similarity">
    <text evidence="1">Belongs to the class-II aminoacyl-tRNA synthetase family.</text>
</comment>
<accession>A8AWB7</accession>
<keyword id="KW-0030">Aminoacyl-tRNA synthetase</keyword>
<keyword id="KW-0067">ATP-binding</keyword>
<keyword id="KW-0963">Cytoplasm</keyword>
<keyword id="KW-0436">Ligase</keyword>
<keyword id="KW-0479">Metal-binding</keyword>
<keyword id="KW-0547">Nucleotide-binding</keyword>
<keyword id="KW-0648">Protein biosynthesis</keyword>
<keyword id="KW-1185">Reference proteome</keyword>
<keyword id="KW-0694">RNA-binding</keyword>
<keyword id="KW-0820">tRNA-binding</keyword>
<keyword id="KW-0862">Zinc</keyword>
<feature type="chain" id="PRO_1000077379" description="Threonine--tRNA ligase">
    <location>
        <begin position="1"/>
        <end position="647"/>
    </location>
</feature>
<feature type="domain" description="TGS" evidence="2">
    <location>
        <begin position="1"/>
        <end position="61"/>
    </location>
</feature>
<feature type="region of interest" description="Catalytic" evidence="1">
    <location>
        <begin position="242"/>
        <end position="540"/>
    </location>
</feature>
<feature type="binding site" evidence="1">
    <location>
        <position position="336"/>
    </location>
    <ligand>
        <name>Zn(2+)</name>
        <dbReference type="ChEBI" id="CHEBI:29105"/>
    </ligand>
</feature>
<feature type="binding site" evidence="1">
    <location>
        <position position="387"/>
    </location>
    <ligand>
        <name>Zn(2+)</name>
        <dbReference type="ChEBI" id="CHEBI:29105"/>
    </ligand>
</feature>
<feature type="binding site" evidence="1">
    <location>
        <position position="517"/>
    </location>
    <ligand>
        <name>Zn(2+)</name>
        <dbReference type="ChEBI" id="CHEBI:29105"/>
    </ligand>
</feature>
<gene>
    <name evidence="1" type="primary">thrS</name>
    <name type="ordered locus">SGO_0778</name>
</gene>
<sequence>MIKITFPDGAVREFESGVTTFEIAQSISNSLAKKALAGKFNGKLIDTTRAITEDGSIEIVTPDHEDALPILRHSAAHLFAQAARRLFPDIHLGVGPAIEDGFYYDTDNTAGQISNEDLPRIEEEMKKIVKENFPSIREEVTKDEAREIFKNDPYKLELIEEHSEDEGGLTIYRQGEYVDLCRGPHVPSTGRIQIFHLLHVAGAYWRGNSDNAMMQRIYGTAWFDKKDLKNYLQMREEAKERDHRKLGKELDLFMISQEVGQGLPFWLPNGATIRRELERYIVDKEIAAGYQHVYTPPLASVELYKTSGHWDHYREDMFPTMDMGDGEEFVLRPMNCPHHIQVFKHHVHSYRELPIRIAEIGMMHRYEKSGALTGLQRVREMSLNDGHLFVTPEQIQEEFQRALQLIIDVYEDFNLTEYRFRLSLRDPQDTHKYFDNDEMWENAQTMLRAALDEMGVDYFEAEGEAAFYGPKLDIQVKTALGKEETLSTIQLDFLLPERFDLKYIGADGEEHRPVMIHRGVISTMERFTAILIENYKGAFPTWLAPHQVTLIPVSNEKHVDYAWEVAKKLRDRGVRADVDERNEKMQFKIRASQTSKIPYQLIVGDKEMEDGTVNVRRYGQKETHTVAVDEFVEAILADIANKSRVEK</sequence>